<organism>
    <name type="scientific">Draba nemorosa</name>
    <name type="common">Woodland whitlowgrass</name>
    <dbReference type="NCBI Taxonomy" id="171822"/>
    <lineage>
        <taxon>Eukaryota</taxon>
        <taxon>Viridiplantae</taxon>
        <taxon>Streptophyta</taxon>
        <taxon>Embryophyta</taxon>
        <taxon>Tracheophyta</taxon>
        <taxon>Spermatophyta</taxon>
        <taxon>Magnoliopsida</taxon>
        <taxon>eudicotyledons</taxon>
        <taxon>Gunneridae</taxon>
        <taxon>Pentapetalae</taxon>
        <taxon>rosids</taxon>
        <taxon>malvids</taxon>
        <taxon>Brassicales</taxon>
        <taxon>Brassicaceae</taxon>
        <taxon>Arabideae</taxon>
        <taxon>Draba</taxon>
    </lineage>
</organism>
<protein>
    <recommendedName>
        <fullName evidence="2">Photosystem II protein D1</fullName>
        <shortName evidence="2">PSII D1 protein</shortName>
        <ecNumber evidence="2">1.10.3.9</ecNumber>
    </recommendedName>
    <alternativeName>
        <fullName evidence="2">Photosystem II Q(B) protein</fullName>
    </alternativeName>
</protein>
<comment type="function">
    <text evidence="2">Photosystem II (PSII) is a light-driven water:plastoquinone oxidoreductase that uses light energy to abstract electrons from H(2)O, generating O(2) and a proton gradient subsequently used for ATP formation. It consists of a core antenna complex that captures photons, and an electron transfer chain that converts photonic excitation into a charge separation. The D1/D2 (PsbA/PsbD) reaction center heterodimer binds P680, the primary electron donor of PSII as well as several subsequent electron acceptors.</text>
</comment>
<comment type="catalytic activity">
    <reaction evidence="2">
        <text>2 a plastoquinone + 4 hnu + 2 H2O = 2 a plastoquinol + O2</text>
        <dbReference type="Rhea" id="RHEA:36359"/>
        <dbReference type="Rhea" id="RHEA-COMP:9561"/>
        <dbReference type="Rhea" id="RHEA-COMP:9562"/>
        <dbReference type="ChEBI" id="CHEBI:15377"/>
        <dbReference type="ChEBI" id="CHEBI:15379"/>
        <dbReference type="ChEBI" id="CHEBI:17757"/>
        <dbReference type="ChEBI" id="CHEBI:30212"/>
        <dbReference type="ChEBI" id="CHEBI:62192"/>
        <dbReference type="EC" id="1.10.3.9"/>
    </reaction>
</comment>
<comment type="cofactor">
    <text evidence="2">The D1/D2 heterodimer binds P680, chlorophylls that are the primary electron donor of PSII, and subsequent electron acceptors. It shares a non-heme iron and each subunit binds pheophytin, quinone, additional chlorophylls, carotenoids and lipids. D1 provides most of the ligands for the Mn4-Ca-O5 cluster of the oxygen-evolving complex (OEC). There is also a Cl(-1) ion associated with D1 and D2, which is required for oxygen evolution. The PSII complex binds additional chlorophylls, carotenoids and specific lipids.</text>
</comment>
<comment type="subunit">
    <text evidence="2">PSII is composed of 1 copy each of membrane proteins PsbA, PsbB, PsbC, PsbD, PsbE, PsbF, PsbH, PsbI, PsbJ, PsbK, PsbL, PsbM, PsbT, PsbX, PsbY, PsbZ, Psb30/Ycf12, at least 3 peripheral proteins of the oxygen-evolving complex and a large number of cofactors. It forms dimeric complexes.</text>
</comment>
<comment type="subcellular location">
    <subcellularLocation>
        <location evidence="2">Plastid</location>
        <location evidence="2">Chloroplast thylakoid membrane</location>
        <topology evidence="2">Multi-pass membrane protein</topology>
    </subcellularLocation>
</comment>
<comment type="PTM">
    <text evidence="2">Tyr-161 forms a radical intermediate that is referred to as redox-active TyrZ, YZ or Y-Z.</text>
</comment>
<comment type="PTM">
    <text evidence="2">C-terminally processed by CTPA; processing is essential to allow assembly of the oxygen-evolving complex and thus photosynthetic growth.</text>
</comment>
<comment type="miscellaneous">
    <text evidence="2">2 of the reaction center chlorophylls (ChlD1 and ChlD2) are entirely coordinated by water.</text>
</comment>
<comment type="miscellaneous">
    <text evidence="2">Herbicides such as atrazine, BNT, diuron or ioxynil bind in the Q(B) binding site and block subsequent electron transfer.</text>
</comment>
<comment type="similarity">
    <text evidence="2">Belongs to the reaction center PufL/M/PsbA/D family.</text>
</comment>
<reference key="1">
    <citation type="submission" date="2007-03" db="EMBL/GenBank/DDBJ databases">
        <title>Sequencing analysis of Draba nemoroza chloroplast DNA.</title>
        <authorList>
            <person name="Hosouchi T."/>
            <person name="Tsuruoka H."/>
            <person name="Kotani H."/>
        </authorList>
    </citation>
    <scope>NUCLEOTIDE SEQUENCE [LARGE SCALE GENOMIC DNA]</scope>
</reference>
<evidence type="ECO:0000250" key="1">
    <source>
        <dbReference type="UniProtKB" id="P83755"/>
    </source>
</evidence>
<evidence type="ECO:0000255" key="2">
    <source>
        <dbReference type="HAMAP-Rule" id="MF_01379"/>
    </source>
</evidence>
<feature type="initiator methionine" description="Removed" evidence="1">
    <location>
        <position position="1"/>
    </location>
</feature>
<feature type="chain" id="PRO_0000339989" description="Photosystem II protein D1" evidence="2">
    <location>
        <begin position="2"/>
        <end position="344"/>
    </location>
</feature>
<feature type="propeptide" id="PRO_0000339990" evidence="2">
    <location>
        <begin position="345"/>
        <end position="353"/>
    </location>
</feature>
<feature type="transmembrane region" description="Helical" evidence="2">
    <location>
        <begin position="29"/>
        <end position="46"/>
    </location>
</feature>
<feature type="transmembrane region" description="Helical" evidence="2">
    <location>
        <begin position="118"/>
        <end position="133"/>
    </location>
</feature>
<feature type="transmembrane region" description="Helical" evidence="2">
    <location>
        <begin position="142"/>
        <end position="156"/>
    </location>
</feature>
<feature type="transmembrane region" description="Helical" evidence="2">
    <location>
        <begin position="197"/>
        <end position="218"/>
    </location>
</feature>
<feature type="transmembrane region" description="Helical" evidence="2">
    <location>
        <begin position="274"/>
        <end position="288"/>
    </location>
</feature>
<feature type="binding site" description="axial binding residue" evidence="2">
    <location>
        <position position="118"/>
    </location>
    <ligand>
        <name>chlorophyll a</name>
        <dbReference type="ChEBI" id="CHEBI:58416"/>
        <label>ChlzD1</label>
    </ligand>
    <ligandPart>
        <name>Mg</name>
        <dbReference type="ChEBI" id="CHEBI:25107"/>
    </ligandPart>
</feature>
<feature type="binding site" evidence="2">
    <location>
        <position position="126"/>
    </location>
    <ligand>
        <name>pheophytin a</name>
        <dbReference type="ChEBI" id="CHEBI:136840"/>
        <label>D1</label>
    </ligand>
</feature>
<feature type="binding site" evidence="2">
    <location>
        <position position="170"/>
    </location>
    <ligand>
        <name>[CaMn4O5] cluster</name>
        <dbReference type="ChEBI" id="CHEBI:189552"/>
    </ligand>
</feature>
<feature type="binding site" evidence="2">
    <location>
        <position position="189"/>
    </location>
    <ligand>
        <name>[CaMn4O5] cluster</name>
        <dbReference type="ChEBI" id="CHEBI:189552"/>
    </ligand>
</feature>
<feature type="binding site" description="axial binding residue" evidence="2">
    <location>
        <position position="198"/>
    </location>
    <ligand>
        <name>chlorophyll a</name>
        <dbReference type="ChEBI" id="CHEBI:58416"/>
        <label>PD1</label>
    </ligand>
    <ligandPart>
        <name>Mg</name>
        <dbReference type="ChEBI" id="CHEBI:25107"/>
    </ligandPart>
</feature>
<feature type="binding site" evidence="2">
    <location>
        <position position="215"/>
    </location>
    <ligand>
        <name>a quinone</name>
        <dbReference type="ChEBI" id="CHEBI:132124"/>
        <label>B</label>
    </ligand>
</feature>
<feature type="binding site" evidence="2">
    <location>
        <position position="215"/>
    </location>
    <ligand>
        <name>Fe cation</name>
        <dbReference type="ChEBI" id="CHEBI:24875"/>
        <note>ligand shared with heterodimeric partner</note>
    </ligand>
</feature>
<feature type="binding site" evidence="2">
    <location>
        <begin position="264"/>
        <end position="265"/>
    </location>
    <ligand>
        <name>a quinone</name>
        <dbReference type="ChEBI" id="CHEBI:132124"/>
        <label>B</label>
    </ligand>
</feature>
<feature type="binding site" evidence="2">
    <location>
        <position position="272"/>
    </location>
    <ligand>
        <name>Fe cation</name>
        <dbReference type="ChEBI" id="CHEBI:24875"/>
        <note>ligand shared with heterodimeric partner</note>
    </ligand>
</feature>
<feature type="binding site" evidence="2">
    <location>
        <position position="332"/>
    </location>
    <ligand>
        <name>[CaMn4O5] cluster</name>
        <dbReference type="ChEBI" id="CHEBI:189552"/>
    </ligand>
</feature>
<feature type="binding site" evidence="2">
    <location>
        <position position="333"/>
    </location>
    <ligand>
        <name>[CaMn4O5] cluster</name>
        <dbReference type="ChEBI" id="CHEBI:189552"/>
    </ligand>
</feature>
<feature type="binding site" evidence="2">
    <location>
        <position position="342"/>
    </location>
    <ligand>
        <name>[CaMn4O5] cluster</name>
        <dbReference type="ChEBI" id="CHEBI:189552"/>
    </ligand>
</feature>
<feature type="binding site" evidence="2">
    <location>
        <position position="344"/>
    </location>
    <ligand>
        <name>[CaMn4O5] cluster</name>
        <dbReference type="ChEBI" id="CHEBI:189552"/>
    </ligand>
</feature>
<feature type="site" description="Tyrosine radical intermediate" evidence="2">
    <location>
        <position position="161"/>
    </location>
</feature>
<feature type="site" description="Stabilizes free radical intermediate" evidence="2">
    <location>
        <position position="190"/>
    </location>
</feature>
<feature type="site" description="Cleavage; by CTPA" evidence="2">
    <location>
        <begin position="344"/>
        <end position="345"/>
    </location>
</feature>
<feature type="modified residue" description="N-acetylthreonine" evidence="1 2">
    <location>
        <position position="2"/>
    </location>
</feature>
<feature type="modified residue" description="Phosphothreonine" evidence="1 2">
    <location>
        <position position="2"/>
    </location>
</feature>
<gene>
    <name evidence="2" type="primary">psbA</name>
</gene>
<name>PSBA_DRANE</name>
<proteinExistence type="inferred from homology"/>
<keyword id="KW-0007">Acetylation</keyword>
<keyword id="KW-0106">Calcium</keyword>
<keyword id="KW-0148">Chlorophyll</keyword>
<keyword id="KW-0150">Chloroplast</keyword>
<keyword id="KW-0157">Chromophore</keyword>
<keyword id="KW-0249">Electron transport</keyword>
<keyword id="KW-0359">Herbicide resistance</keyword>
<keyword id="KW-0408">Iron</keyword>
<keyword id="KW-0460">Magnesium</keyword>
<keyword id="KW-0464">Manganese</keyword>
<keyword id="KW-0472">Membrane</keyword>
<keyword id="KW-0479">Metal-binding</keyword>
<keyword id="KW-0560">Oxidoreductase</keyword>
<keyword id="KW-0597">Phosphoprotein</keyword>
<keyword id="KW-0602">Photosynthesis</keyword>
<keyword id="KW-0604">Photosystem II</keyword>
<keyword id="KW-0934">Plastid</keyword>
<keyword id="KW-0793">Thylakoid</keyword>
<keyword id="KW-0812">Transmembrane</keyword>
<keyword id="KW-1133">Transmembrane helix</keyword>
<keyword id="KW-0813">Transport</keyword>
<sequence>MTAILERRESESLWGRFCNWITSTENRLYIGWFGVLMIPTLLTATSVFIIAFIAAPPVDIDGIREPVSGSLLYGNNIISGAIIPTSAAIGLHFYPIWEAASVDEWLYNGGPYELIVLHFLLGVACYMGREWELSFRLGMRPWIAVAYSAPVAAATAVFLIYPIGQGSFSDGMPLGISGTFNFMIVFQAEHNILMHPFHMLGVAGVFGGSLFSAMHGSLVTSSLIRETTENESANEGYRFGQEEETYNIVAAHGYFGRLIFQYASFNNSRSLHFFLAAWPVVGIWFTALGISTMAFNLNGFNFNQSVVDSQGRVINTWADIINRANLGMEVMHERNAHNFPLDLAAVEAPSTNG</sequence>
<geneLocation type="chloroplast"/>
<dbReference type="EC" id="1.10.3.9" evidence="2"/>
<dbReference type="EMBL" id="AP009373">
    <property type="protein sequence ID" value="BAF50355.1"/>
    <property type="molecule type" value="Genomic_DNA"/>
</dbReference>
<dbReference type="RefSeq" id="YP_001123531.1">
    <property type="nucleotide sequence ID" value="NC_009272.1"/>
</dbReference>
<dbReference type="SMR" id="A4QL00"/>
<dbReference type="GeneID" id="4964688"/>
<dbReference type="GO" id="GO:0009535">
    <property type="term" value="C:chloroplast thylakoid membrane"/>
    <property type="evidence" value="ECO:0007669"/>
    <property type="project" value="UniProtKB-SubCell"/>
</dbReference>
<dbReference type="GO" id="GO:0009523">
    <property type="term" value="C:photosystem II"/>
    <property type="evidence" value="ECO:0007669"/>
    <property type="project" value="UniProtKB-KW"/>
</dbReference>
<dbReference type="GO" id="GO:0016168">
    <property type="term" value="F:chlorophyll binding"/>
    <property type="evidence" value="ECO:0007669"/>
    <property type="project" value="UniProtKB-UniRule"/>
</dbReference>
<dbReference type="GO" id="GO:0045156">
    <property type="term" value="F:electron transporter, transferring electrons within the cyclic electron transport pathway of photosynthesis activity"/>
    <property type="evidence" value="ECO:0007669"/>
    <property type="project" value="InterPro"/>
</dbReference>
<dbReference type="GO" id="GO:0005506">
    <property type="term" value="F:iron ion binding"/>
    <property type="evidence" value="ECO:0007669"/>
    <property type="project" value="UniProtKB-UniRule"/>
</dbReference>
<dbReference type="GO" id="GO:0016682">
    <property type="term" value="F:oxidoreductase activity, acting on diphenols and related substances as donors, oxygen as acceptor"/>
    <property type="evidence" value="ECO:0007669"/>
    <property type="project" value="UniProtKB-UniRule"/>
</dbReference>
<dbReference type="GO" id="GO:0010242">
    <property type="term" value="F:oxygen evolving activity"/>
    <property type="evidence" value="ECO:0007669"/>
    <property type="project" value="UniProtKB-EC"/>
</dbReference>
<dbReference type="GO" id="GO:0009772">
    <property type="term" value="P:photosynthetic electron transport in photosystem II"/>
    <property type="evidence" value="ECO:0007669"/>
    <property type="project" value="InterPro"/>
</dbReference>
<dbReference type="GO" id="GO:0009635">
    <property type="term" value="P:response to herbicide"/>
    <property type="evidence" value="ECO:0007669"/>
    <property type="project" value="UniProtKB-KW"/>
</dbReference>
<dbReference type="CDD" id="cd09289">
    <property type="entry name" value="Photosystem-II_D1"/>
    <property type="match status" value="1"/>
</dbReference>
<dbReference type="FunFam" id="1.20.85.10:FF:000002">
    <property type="entry name" value="Photosystem II protein D1"/>
    <property type="match status" value="1"/>
</dbReference>
<dbReference type="Gene3D" id="1.20.85.10">
    <property type="entry name" value="Photosystem II protein D1-like"/>
    <property type="match status" value="1"/>
</dbReference>
<dbReference type="HAMAP" id="MF_01379">
    <property type="entry name" value="PSII_PsbA_D1"/>
    <property type="match status" value="1"/>
</dbReference>
<dbReference type="InterPro" id="IPR055266">
    <property type="entry name" value="D1/D2"/>
</dbReference>
<dbReference type="InterPro" id="IPR036854">
    <property type="entry name" value="Photo_II_D1/D2_sf"/>
</dbReference>
<dbReference type="InterPro" id="IPR000484">
    <property type="entry name" value="Photo_RC_L/M"/>
</dbReference>
<dbReference type="InterPro" id="IPR055265">
    <property type="entry name" value="Photo_RC_L/M_CS"/>
</dbReference>
<dbReference type="InterPro" id="IPR005867">
    <property type="entry name" value="PSII_D1"/>
</dbReference>
<dbReference type="NCBIfam" id="TIGR01151">
    <property type="entry name" value="psbA"/>
    <property type="match status" value="1"/>
</dbReference>
<dbReference type="PANTHER" id="PTHR33149:SF12">
    <property type="entry name" value="PHOTOSYSTEM II D2 PROTEIN"/>
    <property type="match status" value="1"/>
</dbReference>
<dbReference type="PANTHER" id="PTHR33149">
    <property type="entry name" value="PHOTOSYSTEM II PROTEIN D1"/>
    <property type="match status" value="1"/>
</dbReference>
<dbReference type="Pfam" id="PF00124">
    <property type="entry name" value="Photo_RC"/>
    <property type="match status" value="1"/>
</dbReference>
<dbReference type="PRINTS" id="PR00256">
    <property type="entry name" value="REACTNCENTRE"/>
</dbReference>
<dbReference type="SUPFAM" id="SSF81483">
    <property type="entry name" value="Bacterial photosystem II reaction centre, L and M subunits"/>
    <property type="match status" value="1"/>
</dbReference>
<dbReference type="PROSITE" id="PS00244">
    <property type="entry name" value="REACTION_CENTER"/>
    <property type="match status" value="1"/>
</dbReference>
<accession>A4QL00</accession>